<gene>
    <name type="primary">DYW9</name>
    <name type="synonym">PCMP-H9</name>
    <name type="ordered locus">At4g30700</name>
    <name type="ORF">T10C21.50</name>
</gene>
<protein>
    <recommendedName>
        <fullName>Pentatricopeptide repeat-containing protein At4g30700</fullName>
    </recommendedName>
    <alternativeName>
        <fullName>Protein DYW9</fullName>
    </alternativeName>
</protein>
<keyword id="KW-1185">Reference proteome</keyword>
<keyword id="KW-0677">Repeat</keyword>
<sequence>MLLRTVSSATAETTAALISKNTYLDFFKRSTSISHLAQTHAQIILHGFRNDISLLTKLTQRLSDLGAIYYARDIFLSVQRPDVFLFNVLMRGFSVNESPHSSLSVFAHLRKSTDLKPNSSTYAFAISAASGFRDDRAGRVIHGQAVVDGCDSELLLGSNIVKMYFKFWRVEDARKVFDRMPEKDTILWNTMISGYRKNEMYVESIQVFRDLINESCTRLDTTTLLDILPAVAELQELRLGMQIHSLATKTGCYSHDYVLTGFISLYSKCGKIKMGSALFREFRKPDIVAYNAMIHGYTSNGETELSLSLFKELMLSGARLRSSTLVSLVPVSGHLMLIYAIHGYCLKSNFLSHASVSTALTTVYSKLNEIESARKLFDESPEKSLPSWNAMISGYTQNGLTEDAISLFREMQKSEFSPNPVTITCILSACAQLGALSLGKWVHDLVRSTDFESSIYVSTALIGMYAKCGSIAEARRLFDLMTKKNEVTWNTMISGYGLHGQGQEALNIFYEMLNSGITPTPVTFLCVLYACSHAGLVKEGDEIFNSMIHRYGFEPSVKHYACMVDILGRAGHLQRALQFIEAMSIEPGSSVWETLLGACRIHKDTNLARTVSEKLFELDPDNVGYHVLLSNIHSADRNYPQAATVRQTAKKRKLAKAPGYTLIEIGETPHVFTSGDQSHPQVKEIYEKLEKLEGKMREAGYQPETELALHDVEEEERELMVKVHSERLAIAFGLIATEPGTEIRIIKNLRVCLDCHTVTKLISKITERVIVVRDANRFHHFKDGVCSCGDYW</sequence>
<proteinExistence type="evidence at transcript level"/>
<accession>Q9SUH6</accession>
<accession>Q9M4P4</accession>
<name>PP341_ARATH</name>
<evidence type="ECO:0000305" key="1"/>
<reference key="1">
    <citation type="journal article" date="1999" name="Nature">
        <title>Sequence and analysis of chromosome 4 of the plant Arabidopsis thaliana.</title>
        <authorList>
            <person name="Mayer K.F.X."/>
            <person name="Schueller C."/>
            <person name="Wambutt R."/>
            <person name="Murphy G."/>
            <person name="Volckaert G."/>
            <person name="Pohl T."/>
            <person name="Duesterhoeft A."/>
            <person name="Stiekema W."/>
            <person name="Entian K.-D."/>
            <person name="Terryn N."/>
            <person name="Harris B."/>
            <person name="Ansorge W."/>
            <person name="Brandt P."/>
            <person name="Grivell L.A."/>
            <person name="Rieger M."/>
            <person name="Weichselgartner M."/>
            <person name="de Simone V."/>
            <person name="Obermaier B."/>
            <person name="Mache R."/>
            <person name="Mueller M."/>
            <person name="Kreis M."/>
            <person name="Delseny M."/>
            <person name="Puigdomenech P."/>
            <person name="Watson M."/>
            <person name="Schmidtheini T."/>
            <person name="Reichert B."/>
            <person name="Portetelle D."/>
            <person name="Perez-Alonso M."/>
            <person name="Boutry M."/>
            <person name="Bancroft I."/>
            <person name="Vos P."/>
            <person name="Hoheisel J."/>
            <person name="Zimmermann W."/>
            <person name="Wedler H."/>
            <person name="Ridley P."/>
            <person name="Langham S.-A."/>
            <person name="McCullagh B."/>
            <person name="Bilham L."/>
            <person name="Robben J."/>
            <person name="van der Schueren J."/>
            <person name="Grymonprez B."/>
            <person name="Chuang Y.-J."/>
            <person name="Vandenbussche F."/>
            <person name="Braeken M."/>
            <person name="Weltjens I."/>
            <person name="Voet M."/>
            <person name="Bastiaens I."/>
            <person name="Aert R."/>
            <person name="Defoor E."/>
            <person name="Weitzenegger T."/>
            <person name="Bothe G."/>
            <person name="Ramsperger U."/>
            <person name="Hilbert H."/>
            <person name="Braun M."/>
            <person name="Holzer E."/>
            <person name="Brandt A."/>
            <person name="Peters S."/>
            <person name="van Staveren M."/>
            <person name="Dirkse W."/>
            <person name="Mooijman P."/>
            <person name="Klein Lankhorst R."/>
            <person name="Rose M."/>
            <person name="Hauf J."/>
            <person name="Koetter P."/>
            <person name="Berneiser S."/>
            <person name="Hempel S."/>
            <person name="Feldpausch M."/>
            <person name="Lamberth S."/>
            <person name="Van den Daele H."/>
            <person name="De Keyser A."/>
            <person name="Buysshaert C."/>
            <person name="Gielen J."/>
            <person name="Villarroel R."/>
            <person name="De Clercq R."/>
            <person name="van Montagu M."/>
            <person name="Rogers J."/>
            <person name="Cronin A."/>
            <person name="Quail M.A."/>
            <person name="Bray-Allen S."/>
            <person name="Clark L."/>
            <person name="Doggett J."/>
            <person name="Hall S."/>
            <person name="Kay M."/>
            <person name="Lennard N."/>
            <person name="McLay K."/>
            <person name="Mayes R."/>
            <person name="Pettett A."/>
            <person name="Rajandream M.A."/>
            <person name="Lyne M."/>
            <person name="Benes V."/>
            <person name="Rechmann S."/>
            <person name="Borkova D."/>
            <person name="Bloecker H."/>
            <person name="Scharfe M."/>
            <person name="Grimm M."/>
            <person name="Loehnert T.-H."/>
            <person name="Dose S."/>
            <person name="de Haan M."/>
            <person name="Maarse A.C."/>
            <person name="Schaefer M."/>
            <person name="Mueller-Auer S."/>
            <person name="Gabel C."/>
            <person name="Fuchs M."/>
            <person name="Fartmann B."/>
            <person name="Granderath K."/>
            <person name="Dauner D."/>
            <person name="Herzl A."/>
            <person name="Neumann S."/>
            <person name="Argiriou A."/>
            <person name="Vitale D."/>
            <person name="Liguori R."/>
            <person name="Piravandi E."/>
            <person name="Massenet O."/>
            <person name="Quigley F."/>
            <person name="Clabauld G."/>
            <person name="Muendlein A."/>
            <person name="Felber R."/>
            <person name="Schnabl S."/>
            <person name="Hiller R."/>
            <person name="Schmidt W."/>
            <person name="Lecharny A."/>
            <person name="Aubourg S."/>
            <person name="Chefdor F."/>
            <person name="Cooke R."/>
            <person name="Berger C."/>
            <person name="Monfort A."/>
            <person name="Casacuberta E."/>
            <person name="Gibbons T."/>
            <person name="Weber N."/>
            <person name="Vandenbol M."/>
            <person name="Bargues M."/>
            <person name="Terol J."/>
            <person name="Torres A."/>
            <person name="Perez-Perez A."/>
            <person name="Purnelle B."/>
            <person name="Bent E."/>
            <person name="Johnson S."/>
            <person name="Tacon D."/>
            <person name="Jesse T."/>
            <person name="Heijnen L."/>
            <person name="Schwarz S."/>
            <person name="Scholler P."/>
            <person name="Heber S."/>
            <person name="Francs P."/>
            <person name="Bielke C."/>
            <person name="Frishman D."/>
            <person name="Haase D."/>
            <person name="Lemcke K."/>
            <person name="Mewes H.-W."/>
            <person name="Stocker S."/>
            <person name="Zaccaria P."/>
            <person name="Bevan M."/>
            <person name="Wilson R.K."/>
            <person name="de la Bastide M."/>
            <person name="Habermann K."/>
            <person name="Parnell L."/>
            <person name="Dedhia N."/>
            <person name="Gnoj L."/>
            <person name="Schutz K."/>
            <person name="Huang E."/>
            <person name="Spiegel L."/>
            <person name="Sekhon M."/>
            <person name="Murray J."/>
            <person name="Sheet P."/>
            <person name="Cordes M."/>
            <person name="Abu-Threideh J."/>
            <person name="Stoneking T."/>
            <person name="Kalicki J."/>
            <person name="Graves T."/>
            <person name="Harmon G."/>
            <person name="Edwards J."/>
            <person name="Latreille P."/>
            <person name="Courtney L."/>
            <person name="Cloud J."/>
            <person name="Abbott A."/>
            <person name="Scott K."/>
            <person name="Johnson D."/>
            <person name="Minx P."/>
            <person name="Bentley D."/>
            <person name="Fulton B."/>
            <person name="Miller N."/>
            <person name="Greco T."/>
            <person name="Kemp K."/>
            <person name="Kramer J."/>
            <person name="Fulton L."/>
            <person name="Mardis E."/>
            <person name="Dante M."/>
            <person name="Pepin K."/>
            <person name="Hillier L.W."/>
            <person name="Nelson J."/>
            <person name="Spieth J."/>
            <person name="Ryan E."/>
            <person name="Andrews S."/>
            <person name="Geisel C."/>
            <person name="Layman D."/>
            <person name="Du H."/>
            <person name="Ali J."/>
            <person name="Berghoff A."/>
            <person name="Jones K."/>
            <person name="Drone K."/>
            <person name="Cotton M."/>
            <person name="Joshu C."/>
            <person name="Antonoiu B."/>
            <person name="Zidanic M."/>
            <person name="Strong C."/>
            <person name="Sun H."/>
            <person name="Lamar B."/>
            <person name="Yordan C."/>
            <person name="Ma P."/>
            <person name="Zhong J."/>
            <person name="Preston R."/>
            <person name="Vil D."/>
            <person name="Shekher M."/>
            <person name="Matero A."/>
            <person name="Shah R."/>
            <person name="Swaby I.K."/>
            <person name="O'Shaughnessy A."/>
            <person name="Rodriguez M."/>
            <person name="Hoffman J."/>
            <person name="Till S."/>
            <person name="Granat S."/>
            <person name="Shohdy N."/>
            <person name="Hasegawa A."/>
            <person name="Hameed A."/>
            <person name="Lodhi M."/>
            <person name="Johnson A."/>
            <person name="Chen E."/>
            <person name="Marra M.A."/>
            <person name="Martienssen R."/>
            <person name="McCombie W.R."/>
        </authorList>
    </citation>
    <scope>NUCLEOTIDE SEQUENCE [LARGE SCALE GENOMIC DNA]</scope>
    <source>
        <strain>cv. Columbia</strain>
    </source>
</reference>
<reference key="2">
    <citation type="journal article" date="2017" name="Plant J.">
        <title>Araport11: a complete reannotation of the Arabidopsis thaliana reference genome.</title>
        <authorList>
            <person name="Cheng C.Y."/>
            <person name="Krishnakumar V."/>
            <person name="Chan A.P."/>
            <person name="Thibaud-Nissen F."/>
            <person name="Schobel S."/>
            <person name="Town C.D."/>
        </authorList>
    </citation>
    <scope>GENOME REANNOTATION</scope>
    <source>
        <strain>cv. Columbia</strain>
    </source>
</reference>
<reference key="3">
    <citation type="journal article" date="2000" name="Plant Mol. Biol.">
        <title>In Arabidopsis thaliana, 1% of the genome codes for a novel protein family unique to plants.</title>
        <authorList>
            <person name="Aubourg S."/>
            <person name="Boudet N."/>
            <person name="Kreis M."/>
            <person name="Lecharny A."/>
        </authorList>
    </citation>
    <scope>NUCLEOTIDE SEQUENCE [MRNA] OF 668-792</scope>
    <scope>GENE FAMILY</scope>
</reference>
<reference key="4">
    <citation type="journal article" date="2004" name="Plant Cell">
        <title>Genome-wide analysis of Arabidopsis pentatricopeptide repeat proteins reveals their essential role in organelle biogenesis.</title>
        <authorList>
            <person name="Lurin C."/>
            <person name="Andres C."/>
            <person name="Aubourg S."/>
            <person name="Bellaoui M."/>
            <person name="Bitton F."/>
            <person name="Bruyere C."/>
            <person name="Caboche M."/>
            <person name="Debast C."/>
            <person name="Gualberto J."/>
            <person name="Hoffmann B."/>
            <person name="Lecharny A."/>
            <person name="Le Ret M."/>
            <person name="Martin-Magniette M.-L."/>
            <person name="Mireau H."/>
            <person name="Peeters N."/>
            <person name="Renou J.-P."/>
            <person name="Szurek B."/>
            <person name="Taconnat L."/>
            <person name="Small I."/>
        </authorList>
    </citation>
    <scope>GENE FAMILY</scope>
</reference>
<comment type="similarity">
    <text evidence="1">Belongs to the PPR family. PCMP-H subfamily.</text>
</comment>
<comment type="sequence caution" evidence="1">
    <conflict type="miscellaneous discrepancy">
        <sequence resource="EMBL" id="BX828159"/>
    </conflict>
    <text>Sequencing errors.</text>
</comment>
<comment type="online information" name="Pentatricopeptide repeat proteins">
    <link uri="https://ppr.plantenergy.uwa.edu.au"/>
</comment>
<dbReference type="EMBL" id="AL109787">
    <property type="protein sequence ID" value="CAB52443.1"/>
    <property type="molecule type" value="Genomic_DNA"/>
</dbReference>
<dbReference type="EMBL" id="AL161577">
    <property type="protein sequence ID" value="CAB79788.1"/>
    <property type="molecule type" value="Genomic_DNA"/>
</dbReference>
<dbReference type="EMBL" id="CP002687">
    <property type="protein sequence ID" value="AEE85798.1"/>
    <property type="molecule type" value="Genomic_DNA"/>
</dbReference>
<dbReference type="EMBL" id="BX828159">
    <property type="status" value="NOT_ANNOTATED_CDS"/>
    <property type="molecule type" value="mRNA"/>
</dbReference>
<dbReference type="EMBL" id="AJ006042">
    <property type="protein sequence ID" value="CAA06831.1"/>
    <property type="molecule type" value="mRNA"/>
</dbReference>
<dbReference type="PIR" id="C85359">
    <property type="entry name" value="C85359"/>
</dbReference>
<dbReference type="PIR" id="T52645">
    <property type="entry name" value="T52645"/>
</dbReference>
<dbReference type="SMR" id="Q9SUH6"/>
<dbReference type="FunCoup" id="Q9SUH6">
    <property type="interactions" value="141"/>
</dbReference>
<dbReference type="STRING" id="3702.Q9SUH6"/>
<dbReference type="GlyGen" id="Q9SUH6">
    <property type="glycosylation" value="1 site"/>
</dbReference>
<dbReference type="iPTMnet" id="Q9SUH6"/>
<dbReference type="PaxDb" id="3702-AT4G30700.1"/>
<dbReference type="ProteomicsDB" id="248992"/>
<dbReference type="EnsemblPlants" id="AT4G30700.1">
    <property type="protein sequence ID" value="AT4G30700.1"/>
    <property type="gene ID" value="AT4G30700"/>
</dbReference>
<dbReference type="GeneID" id="829193"/>
<dbReference type="Gramene" id="AT4G30700.1">
    <property type="protein sequence ID" value="AT4G30700.1"/>
    <property type="gene ID" value="AT4G30700"/>
</dbReference>
<dbReference type="KEGG" id="ath:AT4G30700"/>
<dbReference type="Araport" id="AT4G30700"/>
<dbReference type="TAIR" id="AT4G30700">
    <property type="gene designation" value="MEF29"/>
</dbReference>
<dbReference type="eggNOG" id="KOG4197">
    <property type="taxonomic scope" value="Eukaryota"/>
</dbReference>
<dbReference type="HOGENOM" id="CLU_002706_15_1_1"/>
<dbReference type="InParanoid" id="Q9SUH6"/>
<dbReference type="OMA" id="VYCRLNE"/>
<dbReference type="PhylomeDB" id="Q9SUH6"/>
<dbReference type="PRO" id="PR:Q9SUH6"/>
<dbReference type="Proteomes" id="UP000006548">
    <property type="component" value="Chromosome 4"/>
</dbReference>
<dbReference type="ExpressionAtlas" id="Q9SUH6">
    <property type="expression patterns" value="baseline and differential"/>
</dbReference>
<dbReference type="GO" id="GO:0009507">
    <property type="term" value="C:chloroplast"/>
    <property type="evidence" value="ECO:0000314"/>
    <property type="project" value="TAIR"/>
</dbReference>
<dbReference type="GO" id="GO:0005739">
    <property type="term" value="C:mitochondrion"/>
    <property type="evidence" value="ECO:0000314"/>
    <property type="project" value="TAIR"/>
</dbReference>
<dbReference type="GO" id="GO:0003723">
    <property type="term" value="F:RNA binding"/>
    <property type="evidence" value="ECO:0007669"/>
    <property type="project" value="InterPro"/>
</dbReference>
<dbReference type="GO" id="GO:0008270">
    <property type="term" value="F:zinc ion binding"/>
    <property type="evidence" value="ECO:0007669"/>
    <property type="project" value="InterPro"/>
</dbReference>
<dbReference type="GO" id="GO:0016554">
    <property type="term" value="P:cytidine to uridine editing"/>
    <property type="evidence" value="ECO:0000315"/>
    <property type="project" value="TAIR"/>
</dbReference>
<dbReference type="GO" id="GO:0080156">
    <property type="term" value="P:mitochondrial mRNA modification"/>
    <property type="evidence" value="ECO:0000315"/>
    <property type="project" value="TAIR"/>
</dbReference>
<dbReference type="GO" id="GO:0000963">
    <property type="term" value="P:mitochondrial RNA processing"/>
    <property type="evidence" value="ECO:0000315"/>
    <property type="project" value="TAIR"/>
</dbReference>
<dbReference type="FunFam" id="1.25.40.10:FF:000364">
    <property type="entry name" value="Pentatricopeptide repeat (PPR-like) superfamily protein"/>
    <property type="match status" value="1"/>
</dbReference>
<dbReference type="FunFam" id="1.25.40.10:FF:000463">
    <property type="entry name" value="Pentatricopeptide repeat-containing protein"/>
    <property type="match status" value="1"/>
</dbReference>
<dbReference type="FunFam" id="1.25.40.10:FF:001104">
    <property type="entry name" value="Uncharacterized protein"/>
    <property type="match status" value="1"/>
</dbReference>
<dbReference type="Gene3D" id="1.25.40.10">
    <property type="entry name" value="Tetratricopeptide repeat domain"/>
    <property type="match status" value="5"/>
</dbReference>
<dbReference type="InterPro" id="IPR032867">
    <property type="entry name" value="DYW_dom"/>
</dbReference>
<dbReference type="InterPro" id="IPR046848">
    <property type="entry name" value="E_motif"/>
</dbReference>
<dbReference type="InterPro" id="IPR046849">
    <property type="entry name" value="Eplus_motif"/>
</dbReference>
<dbReference type="InterPro" id="IPR002885">
    <property type="entry name" value="Pentatricopeptide_rpt"/>
</dbReference>
<dbReference type="InterPro" id="IPR046960">
    <property type="entry name" value="PPR_At4g14850-like_plant"/>
</dbReference>
<dbReference type="InterPro" id="IPR011990">
    <property type="entry name" value="TPR-like_helical_dom_sf"/>
</dbReference>
<dbReference type="NCBIfam" id="TIGR00756">
    <property type="entry name" value="PPR"/>
    <property type="match status" value="5"/>
</dbReference>
<dbReference type="PANTHER" id="PTHR47926">
    <property type="entry name" value="PENTATRICOPEPTIDE REPEAT-CONTAINING PROTEIN"/>
    <property type="match status" value="1"/>
</dbReference>
<dbReference type="PANTHER" id="PTHR47926:SF452">
    <property type="entry name" value="PENTATRICOPEPTIDE REPEAT-CONTAINING PROTEIN"/>
    <property type="match status" value="1"/>
</dbReference>
<dbReference type="Pfam" id="PF14432">
    <property type="entry name" value="DYW_deaminase"/>
    <property type="match status" value="1"/>
</dbReference>
<dbReference type="Pfam" id="PF20431">
    <property type="entry name" value="E_motif"/>
    <property type="match status" value="1"/>
</dbReference>
<dbReference type="Pfam" id="PF20430">
    <property type="entry name" value="Eplus_motif"/>
    <property type="match status" value="1"/>
</dbReference>
<dbReference type="Pfam" id="PF01535">
    <property type="entry name" value="PPR"/>
    <property type="match status" value="3"/>
</dbReference>
<dbReference type="Pfam" id="PF13041">
    <property type="entry name" value="PPR_2"/>
    <property type="match status" value="2"/>
</dbReference>
<dbReference type="SUPFAM" id="SSF48452">
    <property type="entry name" value="TPR-like"/>
    <property type="match status" value="1"/>
</dbReference>
<dbReference type="PROSITE" id="PS51375">
    <property type="entry name" value="PPR"/>
    <property type="match status" value="12"/>
</dbReference>
<organism>
    <name type="scientific">Arabidopsis thaliana</name>
    <name type="common">Mouse-ear cress</name>
    <dbReference type="NCBI Taxonomy" id="3702"/>
    <lineage>
        <taxon>Eukaryota</taxon>
        <taxon>Viridiplantae</taxon>
        <taxon>Streptophyta</taxon>
        <taxon>Embryophyta</taxon>
        <taxon>Tracheophyta</taxon>
        <taxon>Spermatophyta</taxon>
        <taxon>Magnoliopsida</taxon>
        <taxon>eudicotyledons</taxon>
        <taxon>Gunneridae</taxon>
        <taxon>Pentapetalae</taxon>
        <taxon>rosids</taxon>
        <taxon>malvids</taxon>
        <taxon>Brassicales</taxon>
        <taxon>Brassicaceae</taxon>
        <taxon>Camelineae</taxon>
        <taxon>Arabidopsis</taxon>
    </lineage>
</organism>
<feature type="chain" id="PRO_0000363458" description="Pentatricopeptide repeat-containing protein At4g30700">
    <location>
        <begin position="1"/>
        <end position="792"/>
    </location>
</feature>
<feature type="repeat" description="PPR 1">
    <location>
        <begin position="51"/>
        <end position="81"/>
    </location>
</feature>
<feature type="repeat" description="PPR 2">
    <location>
        <begin position="82"/>
        <end position="117"/>
    </location>
</feature>
<feature type="repeat" description="PPR 3">
    <location>
        <begin position="118"/>
        <end position="152"/>
    </location>
</feature>
<feature type="repeat" description="PPR 4">
    <location>
        <begin position="153"/>
        <end position="183"/>
    </location>
</feature>
<feature type="repeat" description="PPR 5">
    <location>
        <begin position="184"/>
        <end position="218"/>
    </location>
</feature>
<feature type="repeat" description="PPR 6">
    <location>
        <begin position="220"/>
        <end position="254"/>
    </location>
</feature>
<feature type="repeat" description="PPR 7">
    <location>
        <begin position="255"/>
        <end position="285"/>
    </location>
</feature>
<feature type="repeat" description="PPR 8">
    <location>
        <begin position="286"/>
        <end position="320"/>
    </location>
</feature>
<feature type="repeat" description="PPR 9">
    <location>
        <begin position="321"/>
        <end position="352"/>
    </location>
</feature>
<feature type="repeat" description="PPR 10">
    <location>
        <begin position="353"/>
        <end position="383"/>
    </location>
</feature>
<feature type="repeat" description="PPR 11">
    <location>
        <begin position="384"/>
        <end position="418"/>
    </location>
</feature>
<feature type="repeat" description="PPR 12">
    <location>
        <begin position="419"/>
        <end position="453"/>
    </location>
</feature>
<feature type="repeat" description="PPR 13">
    <location>
        <begin position="454"/>
        <end position="484"/>
    </location>
</feature>
<feature type="repeat" description="PPR 14">
    <location>
        <begin position="485"/>
        <end position="519"/>
    </location>
</feature>
<feature type="repeat" description="PPR 15">
    <location>
        <begin position="520"/>
        <end position="555"/>
    </location>
</feature>
<feature type="repeat" description="PPR 16">
    <location>
        <begin position="556"/>
        <end position="586"/>
    </location>
</feature>
<feature type="region of interest" description="Type E motif">
    <location>
        <begin position="591"/>
        <end position="666"/>
    </location>
</feature>
<feature type="region of interest" description="Type E(+) motif">
    <location>
        <begin position="667"/>
        <end position="697"/>
    </location>
</feature>
<feature type="region of interest" description="Type DYW motif">
    <location>
        <begin position="698"/>
        <end position="792"/>
    </location>
</feature>